<evidence type="ECO:0000250" key="1"/>
<evidence type="ECO:0000255" key="2">
    <source>
        <dbReference type="HAMAP-Rule" id="MF_00118"/>
    </source>
</evidence>
<reference key="1">
    <citation type="submission" date="2006-10" db="EMBL/GenBank/DDBJ databases">
        <title>Complete sequence of Methanosaeta thermophila PT.</title>
        <authorList>
            <consortium name="US DOE Joint Genome Institute"/>
            <person name="Copeland A."/>
            <person name="Lucas S."/>
            <person name="Lapidus A."/>
            <person name="Barry K."/>
            <person name="Detter J.C."/>
            <person name="Glavina del Rio T."/>
            <person name="Hammon N."/>
            <person name="Israni S."/>
            <person name="Pitluck S."/>
            <person name="Chain P."/>
            <person name="Malfatti S."/>
            <person name="Shin M."/>
            <person name="Vergez L."/>
            <person name="Schmutz J."/>
            <person name="Larimer F."/>
            <person name="Land M."/>
            <person name="Hauser L."/>
            <person name="Kyrpides N."/>
            <person name="Kim E."/>
            <person name="Smith K.S."/>
            <person name="Ingram-Smith C."/>
            <person name="Richardson P."/>
        </authorList>
    </citation>
    <scope>NUCLEOTIDE SEQUENCE [LARGE SCALE GENOMIC DNA]</scope>
    <source>
        <strain>DSM 6194 / JCM 14653 / NBRC 101360 / PT</strain>
    </source>
</reference>
<gene>
    <name evidence="2" type="primary">tuf</name>
    <name type="ordered locus">Mthe_0821</name>
</gene>
<organism>
    <name type="scientific">Methanothrix thermoacetophila (strain DSM 6194 / JCM 14653 / NBRC 101360 / PT)</name>
    <name type="common">Methanosaeta thermophila</name>
    <dbReference type="NCBI Taxonomy" id="349307"/>
    <lineage>
        <taxon>Archaea</taxon>
        <taxon>Methanobacteriati</taxon>
        <taxon>Methanobacteriota</taxon>
        <taxon>Stenosarchaea group</taxon>
        <taxon>Methanomicrobia</taxon>
        <taxon>Methanotrichales</taxon>
        <taxon>Methanotrichaceae</taxon>
        <taxon>Methanothrix</taxon>
    </lineage>
</organism>
<protein>
    <recommendedName>
        <fullName evidence="2">Elongation factor 1-alpha</fullName>
        <shortName evidence="2">EF-1-alpha</shortName>
        <ecNumber evidence="2">3.6.5.3</ecNumber>
    </recommendedName>
    <alternativeName>
        <fullName evidence="2">Elongation factor Tu</fullName>
        <shortName evidence="2">EF-Tu</shortName>
    </alternativeName>
</protein>
<feature type="chain" id="PRO_1000015693" description="Elongation factor 1-alpha">
    <location>
        <begin position="1"/>
        <end position="424"/>
    </location>
</feature>
<feature type="domain" description="tr-type G">
    <location>
        <begin position="5"/>
        <end position="223"/>
    </location>
</feature>
<feature type="region of interest" description="G1" evidence="1">
    <location>
        <begin position="14"/>
        <end position="21"/>
    </location>
</feature>
<feature type="region of interest" description="G2" evidence="1">
    <location>
        <begin position="70"/>
        <end position="74"/>
    </location>
</feature>
<feature type="region of interest" description="G3" evidence="1">
    <location>
        <begin position="91"/>
        <end position="94"/>
    </location>
</feature>
<feature type="region of interest" description="G4" evidence="1">
    <location>
        <begin position="146"/>
        <end position="149"/>
    </location>
</feature>
<feature type="region of interest" description="G5" evidence="1">
    <location>
        <begin position="187"/>
        <end position="189"/>
    </location>
</feature>
<feature type="binding site" evidence="2">
    <location>
        <begin position="14"/>
        <end position="21"/>
    </location>
    <ligand>
        <name>GTP</name>
        <dbReference type="ChEBI" id="CHEBI:37565"/>
    </ligand>
</feature>
<feature type="binding site" evidence="2">
    <location>
        <position position="21"/>
    </location>
    <ligand>
        <name>Mg(2+)</name>
        <dbReference type="ChEBI" id="CHEBI:18420"/>
    </ligand>
</feature>
<feature type="binding site" evidence="2">
    <location>
        <begin position="91"/>
        <end position="95"/>
    </location>
    <ligand>
        <name>GTP</name>
        <dbReference type="ChEBI" id="CHEBI:37565"/>
    </ligand>
</feature>
<feature type="binding site" evidence="2">
    <location>
        <begin position="146"/>
        <end position="149"/>
    </location>
    <ligand>
        <name>GTP</name>
        <dbReference type="ChEBI" id="CHEBI:37565"/>
    </ligand>
</feature>
<name>EF1A_METTP</name>
<accession>A0B7D6</accession>
<comment type="function">
    <text evidence="2">GTP hydrolase that promotes the GTP-dependent binding of aminoacyl-tRNA to the A-site of ribosomes during protein biosynthesis.</text>
</comment>
<comment type="catalytic activity">
    <reaction evidence="2">
        <text>GTP + H2O = GDP + phosphate + H(+)</text>
        <dbReference type="Rhea" id="RHEA:19669"/>
        <dbReference type="ChEBI" id="CHEBI:15377"/>
        <dbReference type="ChEBI" id="CHEBI:15378"/>
        <dbReference type="ChEBI" id="CHEBI:37565"/>
        <dbReference type="ChEBI" id="CHEBI:43474"/>
        <dbReference type="ChEBI" id="CHEBI:58189"/>
        <dbReference type="EC" id="3.6.5.3"/>
    </reaction>
    <physiologicalReaction direction="left-to-right" evidence="2">
        <dbReference type="Rhea" id="RHEA:19670"/>
    </physiologicalReaction>
</comment>
<comment type="subcellular location">
    <subcellularLocation>
        <location evidence="2">Cytoplasm</location>
    </subcellularLocation>
</comment>
<comment type="similarity">
    <text evidence="2">Belongs to the TRAFAC class translation factor GTPase superfamily. Classic translation factor GTPase family. EF-Tu/EF-1A subfamily.</text>
</comment>
<proteinExistence type="inferred from homology"/>
<dbReference type="EC" id="3.6.5.3" evidence="2"/>
<dbReference type="EMBL" id="CP000477">
    <property type="protein sequence ID" value="ABK14610.1"/>
    <property type="molecule type" value="Genomic_DNA"/>
</dbReference>
<dbReference type="RefSeq" id="WP_011696006.1">
    <property type="nucleotide sequence ID" value="NC_008553.1"/>
</dbReference>
<dbReference type="SMR" id="A0B7D6"/>
<dbReference type="STRING" id="349307.Mthe_0821"/>
<dbReference type="GeneID" id="4462112"/>
<dbReference type="KEGG" id="mtp:Mthe_0821"/>
<dbReference type="HOGENOM" id="CLU_007265_3_5_2"/>
<dbReference type="OrthoDB" id="371718at2157"/>
<dbReference type="Proteomes" id="UP000000674">
    <property type="component" value="Chromosome"/>
</dbReference>
<dbReference type="GO" id="GO:0005737">
    <property type="term" value="C:cytoplasm"/>
    <property type="evidence" value="ECO:0007669"/>
    <property type="project" value="UniProtKB-SubCell"/>
</dbReference>
<dbReference type="GO" id="GO:0005525">
    <property type="term" value="F:GTP binding"/>
    <property type="evidence" value="ECO:0007669"/>
    <property type="project" value="UniProtKB-UniRule"/>
</dbReference>
<dbReference type="GO" id="GO:0003924">
    <property type="term" value="F:GTPase activity"/>
    <property type="evidence" value="ECO:0007669"/>
    <property type="project" value="InterPro"/>
</dbReference>
<dbReference type="GO" id="GO:0003746">
    <property type="term" value="F:translation elongation factor activity"/>
    <property type="evidence" value="ECO:0007669"/>
    <property type="project" value="UniProtKB-UniRule"/>
</dbReference>
<dbReference type="CDD" id="cd01883">
    <property type="entry name" value="EF1_alpha"/>
    <property type="match status" value="1"/>
</dbReference>
<dbReference type="CDD" id="cd03693">
    <property type="entry name" value="EF1_alpha_II"/>
    <property type="match status" value="1"/>
</dbReference>
<dbReference type="CDD" id="cd03705">
    <property type="entry name" value="EF1_alpha_III"/>
    <property type="match status" value="1"/>
</dbReference>
<dbReference type="FunFam" id="2.40.30.10:FF:000003">
    <property type="entry name" value="Elongation factor 1-alpha"/>
    <property type="match status" value="1"/>
</dbReference>
<dbReference type="FunFam" id="2.40.30.10:FF:000005">
    <property type="entry name" value="Elongation factor 1-alpha"/>
    <property type="match status" value="1"/>
</dbReference>
<dbReference type="Gene3D" id="3.40.50.300">
    <property type="entry name" value="P-loop containing nucleotide triphosphate hydrolases"/>
    <property type="match status" value="1"/>
</dbReference>
<dbReference type="Gene3D" id="2.40.30.10">
    <property type="entry name" value="Translation factors"/>
    <property type="match status" value="2"/>
</dbReference>
<dbReference type="HAMAP" id="MF_00118_A">
    <property type="entry name" value="EF_Tu_A"/>
    <property type="match status" value="1"/>
</dbReference>
<dbReference type="InterPro" id="IPR004161">
    <property type="entry name" value="EFTu-like_2"/>
</dbReference>
<dbReference type="InterPro" id="IPR031157">
    <property type="entry name" value="G_TR_CS"/>
</dbReference>
<dbReference type="InterPro" id="IPR054696">
    <property type="entry name" value="GTP-eEF1A_C"/>
</dbReference>
<dbReference type="InterPro" id="IPR027417">
    <property type="entry name" value="P-loop_NTPase"/>
</dbReference>
<dbReference type="InterPro" id="IPR005225">
    <property type="entry name" value="Small_GTP-bd"/>
</dbReference>
<dbReference type="InterPro" id="IPR000795">
    <property type="entry name" value="T_Tr_GTP-bd_dom"/>
</dbReference>
<dbReference type="InterPro" id="IPR050100">
    <property type="entry name" value="TRAFAC_GTPase_members"/>
</dbReference>
<dbReference type="InterPro" id="IPR009000">
    <property type="entry name" value="Transl_B-barrel_sf"/>
</dbReference>
<dbReference type="InterPro" id="IPR009001">
    <property type="entry name" value="Transl_elong_EF1A/Init_IF2_C"/>
</dbReference>
<dbReference type="InterPro" id="IPR004539">
    <property type="entry name" value="Transl_elong_EF1A_euk/arc"/>
</dbReference>
<dbReference type="NCBIfam" id="TIGR00483">
    <property type="entry name" value="EF-1_alpha"/>
    <property type="match status" value="1"/>
</dbReference>
<dbReference type="NCBIfam" id="NF008969">
    <property type="entry name" value="PRK12317.1"/>
    <property type="match status" value="1"/>
</dbReference>
<dbReference type="NCBIfam" id="TIGR00231">
    <property type="entry name" value="small_GTP"/>
    <property type="match status" value="1"/>
</dbReference>
<dbReference type="PANTHER" id="PTHR23115">
    <property type="entry name" value="TRANSLATION FACTOR"/>
    <property type="match status" value="1"/>
</dbReference>
<dbReference type="Pfam" id="PF22594">
    <property type="entry name" value="GTP-eEF1A_C"/>
    <property type="match status" value="1"/>
</dbReference>
<dbReference type="Pfam" id="PF00009">
    <property type="entry name" value="GTP_EFTU"/>
    <property type="match status" value="1"/>
</dbReference>
<dbReference type="Pfam" id="PF03144">
    <property type="entry name" value="GTP_EFTU_D2"/>
    <property type="match status" value="1"/>
</dbReference>
<dbReference type="PRINTS" id="PR00315">
    <property type="entry name" value="ELONGATNFCT"/>
</dbReference>
<dbReference type="SUPFAM" id="SSF50465">
    <property type="entry name" value="EF-Tu/eEF-1alpha/eIF2-gamma C-terminal domain"/>
    <property type="match status" value="1"/>
</dbReference>
<dbReference type="SUPFAM" id="SSF52540">
    <property type="entry name" value="P-loop containing nucleoside triphosphate hydrolases"/>
    <property type="match status" value="1"/>
</dbReference>
<dbReference type="SUPFAM" id="SSF50447">
    <property type="entry name" value="Translation proteins"/>
    <property type="match status" value="1"/>
</dbReference>
<dbReference type="PROSITE" id="PS00301">
    <property type="entry name" value="G_TR_1"/>
    <property type="match status" value="1"/>
</dbReference>
<dbReference type="PROSITE" id="PS51722">
    <property type="entry name" value="G_TR_2"/>
    <property type="match status" value="1"/>
</dbReference>
<sequence length="424" mass="46767">MADTKPHLNLAFIGHVDHGKSTLVGRMMYEMGAIDEHIIEQYRKEAAAKGKATFEFAWVMDSLKEERERGVTIDIAHQRFDTDKYYFTVVDCPGHRDFVKNMITGASQADAAVLVVAAPDGVMAQTKEHVFLARTLGVNQLIVAINKMDATEPPYDEKRYNEVKEEVGKLLRMVGYKIDEVPFIPVSAYNGDNVVKHSDRTKWYTGPTVLDALNALKEPQKPVNLPLRIPVQDVYSISGVGTVPVGRVETGVLKKGDKVIFEPAHVSGEVKSIEIHHQEIPEAYPGDNIGWNVRGIGKNDIRRGDVCGHVDNPPTVAKEFTAQIVVLQHPSAISAGYTPVFHCHTAQVACTITEIKAKLDPRTGSVKEQNPAFIKTGDAAIISVRPTKPMVIEKVKEIPQLGRFAIRDMGMTIAAGMCQNVTPR</sequence>
<keyword id="KW-0963">Cytoplasm</keyword>
<keyword id="KW-0251">Elongation factor</keyword>
<keyword id="KW-0342">GTP-binding</keyword>
<keyword id="KW-0378">Hydrolase</keyword>
<keyword id="KW-0460">Magnesium</keyword>
<keyword id="KW-0479">Metal-binding</keyword>
<keyword id="KW-0547">Nucleotide-binding</keyword>
<keyword id="KW-0648">Protein biosynthesis</keyword>
<keyword id="KW-1185">Reference proteome</keyword>